<comment type="function">
    <text evidence="1">Binds 23S rRNA and is also seen to make contacts with the A and possibly P site tRNAs.</text>
</comment>
<comment type="subunit">
    <text evidence="1">Part of the 50S ribosomal subunit.</text>
</comment>
<comment type="similarity">
    <text evidence="1">Belongs to the universal ribosomal protein uL16 family.</text>
</comment>
<organism>
    <name type="scientific">Bradyrhizobium diazoefficiens (strain JCM 10833 / BCRC 13528 / IAM 13628 / NBRC 14792 / USDA 110)</name>
    <dbReference type="NCBI Taxonomy" id="224911"/>
    <lineage>
        <taxon>Bacteria</taxon>
        <taxon>Pseudomonadati</taxon>
        <taxon>Pseudomonadota</taxon>
        <taxon>Alphaproteobacteria</taxon>
        <taxon>Hyphomicrobiales</taxon>
        <taxon>Nitrobacteraceae</taxon>
        <taxon>Bradyrhizobium</taxon>
    </lineage>
</organism>
<name>RL16_BRADU</name>
<evidence type="ECO:0000255" key="1">
    <source>
        <dbReference type="HAMAP-Rule" id="MF_01342"/>
    </source>
</evidence>
<evidence type="ECO:0000305" key="2"/>
<accession>Q89J91</accession>
<feature type="chain" id="PRO_0000062059" description="Large ribosomal subunit protein uL16">
    <location>
        <begin position="1"/>
        <end position="136"/>
    </location>
</feature>
<reference key="1">
    <citation type="journal article" date="2002" name="DNA Res.">
        <title>Complete genomic sequence of nitrogen-fixing symbiotic bacterium Bradyrhizobium japonicum USDA110.</title>
        <authorList>
            <person name="Kaneko T."/>
            <person name="Nakamura Y."/>
            <person name="Sato S."/>
            <person name="Minamisawa K."/>
            <person name="Uchiumi T."/>
            <person name="Sasamoto S."/>
            <person name="Watanabe A."/>
            <person name="Idesawa K."/>
            <person name="Iriguchi M."/>
            <person name="Kawashima K."/>
            <person name="Kohara M."/>
            <person name="Matsumoto M."/>
            <person name="Shimpo S."/>
            <person name="Tsuruoka H."/>
            <person name="Wada T."/>
            <person name="Yamada M."/>
            <person name="Tabata S."/>
        </authorList>
    </citation>
    <scope>NUCLEOTIDE SEQUENCE [LARGE SCALE GENOMIC DNA]</scope>
    <source>
        <strain>JCM 10833 / BCRC 13528 / IAM 13628 / NBRC 14792 / USDA 110</strain>
    </source>
</reference>
<dbReference type="EMBL" id="BA000040">
    <property type="protein sequence ID" value="BAC50658.1"/>
    <property type="molecule type" value="Genomic_DNA"/>
</dbReference>
<dbReference type="RefSeq" id="NP_772033.1">
    <property type="nucleotide sequence ID" value="NC_004463.1"/>
</dbReference>
<dbReference type="SMR" id="Q89J91"/>
<dbReference type="FunCoup" id="Q89J91">
    <property type="interactions" value="719"/>
</dbReference>
<dbReference type="STRING" id="224911.AAV28_24375"/>
<dbReference type="EnsemblBacteria" id="BAC50658">
    <property type="protein sequence ID" value="BAC50658"/>
    <property type="gene ID" value="BAC50658"/>
</dbReference>
<dbReference type="KEGG" id="bja:bll5393"/>
<dbReference type="PATRIC" id="fig|224911.5.peg.5480"/>
<dbReference type="eggNOG" id="COG0197">
    <property type="taxonomic scope" value="Bacteria"/>
</dbReference>
<dbReference type="HOGENOM" id="CLU_078858_2_1_5"/>
<dbReference type="InParanoid" id="Q89J91"/>
<dbReference type="OrthoDB" id="9802589at2"/>
<dbReference type="PhylomeDB" id="Q89J91"/>
<dbReference type="Proteomes" id="UP000002526">
    <property type="component" value="Chromosome"/>
</dbReference>
<dbReference type="GO" id="GO:0022625">
    <property type="term" value="C:cytosolic large ribosomal subunit"/>
    <property type="evidence" value="ECO:0000318"/>
    <property type="project" value="GO_Central"/>
</dbReference>
<dbReference type="GO" id="GO:0019843">
    <property type="term" value="F:rRNA binding"/>
    <property type="evidence" value="ECO:0000318"/>
    <property type="project" value="GO_Central"/>
</dbReference>
<dbReference type="GO" id="GO:0003735">
    <property type="term" value="F:structural constituent of ribosome"/>
    <property type="evidence" value="ECO:0000318"/>
    <property type="project" value="GO_Central"/>
</dbReference>
<dbReference type="GO" id="GO:0000049">
    <property type="term" value="F:tRNA binding"/>
    <property type="evidence" value="ECO:0007669"/>
    <property type="project" value="UniProtKB-KW"/>
</dbReference>
<dbReference type="GO" id="GO:0006412">
    <property type="term" value="P:translation"/>
    <property type="evidence" value="ECO:0007669"/>
    <property type="project" value="UniProtKB-UniRule"/>
</dbReference>
<dbReference type="CDD" id="cd01433">
    <property type="entry name" value="Ribosomal_L16_L10e"/>
    <property type="match status" value="1"/>
</dbReference>
<dbReference type="FunFam" id="3.90.1170.10:FF:000001">
    <property type="entry name" value="50S ribosomal protein L16"/>
    <property type="match status" value="1"/>
</dbReference>
<dbReference type="Gene3D" id="3.90.1170.10">
    <property type="entry name" value="Ribosomal protein L10e/L16"/>
    <property type="match status" value="1"/>
</dbReference>
<dbReference type="HAMAP" id="MF_01342">
    <property type="entry name" value="Ribosomal_uL16"/>
    <property type="match status" value="1"/>
</dbReference>
<dbReference type="InterPro" id="IPR047873">
    <property type="entry name" value="Ribosomal_uL16"/>
</dbReference>
<dbReference type="InterPro" id="IPR000114">
    <property type="entry name" value="Ribosomal_uL16_bact-type"/>
</dbReference>
<dbReference type="InterPro" id="IPR020798">
    <property type="entry name" value="Ribosomal_uL16_CS"/>
</dbReference>
<dbReference type="InterPro" id="IPR016180">
    <property type="entry name" value="Ribosomal_uL16_dom"/>
</dbReference>
<dbReference type="InterPro" id="IPR036920">
    <property type="entry name" value="Ribosomal_uL16_sf"/>
</dbReference>
<dbReference type="NCBIfam" id="TIGR01164">
    <property type="entry name" value="rplP_bact"/>
    <property type="match status" value="1"/>
</dbReference>
<dbReference type="PANTHER" id="PTHR12220">
    <property type="entry name" value="50S/60S RIBOSOMAL PROTEIN L16"/>
    <property type="match status" value="1"/>
</dbReference>
<dbReference type="PANTHER" id="PTHR12220:SF13">
    <property type="entry name" value="LARGE RIBOSOMAL SUBUNIT PROTEIN UL16M"/>
    <property type="match status" value="1"/>
</dbReference>
<dbReference type="Pfam" id="PF00252">
    <property type="entry name" value="Ribosomal_L16"/>
    <property type="match status" value="1"/>
</dbReference>
<dbReference type="PRINTS" id="PR00060">
    <property type="entry name" value="RIBOSOMALL16"/>
</dbReference>
<dbReference type="SUPFAM" id="SSF54686">
    <property type="entry name" value="Ribosomal protein L16p/L10e"/>
    <property type="match status" value="1"/>
</dbReference>
<dbReference type="PROSITE" id="PS00586">
    <property type="entry name" value="RIBOSOMAL_L16_1"/>
    <property type="match status" value="1"/>
</dbReference>
<dbReference type="PROSITE" id="PS00701">
    <property type="entry name" value="RIBOSOMAL_L16_2"/>
    <property type="match status" value="1"/>
</dbReference>
<sequence>MQPKKTKFRKAHKGRIHGVASSGATLAFGQYGLKATEPERVTARQIEAARRALTRHMKRAGRVWIRVFPDLPVSKKPAEVRMGSGKGSPELWVARVKPGRVLFEIDGVNTQTAREALTLAAAKLPIKTRFVERIAE</sequence>
<protein>
    <recommendedName>
        <fullName evidence="1">Large ribosomal subunit protein uL16</fullName>
    </recommendedName>
    <alternativeName>
        <fullName evidence="2">50S ribosomal protein L16</fullName>
    </alternativeName>
</protein>
<proteinExistence type="inferred from homology"/>
<gene>
    <name evidence="1" type="primary">rplP</name>
    <name type="ordered locus">bll5393</name>
</gene>
<keyword id="KW-1185">Reference proteome</keyword>
<keyword id="KW-0687">Ribonucleoprotein</keyword>
<keyword id="KW-0689">Ribosomal protein</keyword>
<keyword id="KW-0694">RNA-binding</keyword>
<keyword id="KW-0699">rRNA-binding</keyword>
<keyword id="KW-0820">tRNA-binding</keyword>